<feature type="chain" id="PRO_0000087900" description="Type II methyltransferase M.NgoPII">
    <location>
        <begin position="1"/>
        <end position="341"/>
    </location>
</feature>
<feature type="domain" description="SAM-dependent MTase C5-type" evidence="1">
    <location>
        <begin position="12"/>
        <end position="341"/>
    </location>
</feature>
<feature type="active site" evidence="1 2">
    <location>
        <position position="84"/>
    </location>
</feature>
<protein>
    <recommendedName>
        <fullName evidence="3">Type II methyltransferase M.NgoPII</fullName>
        <shortName evidence="4">M.NgoPII</shortName>
        <ecNumber evidence="1">2.1.1.37</ecNumber>
    </recommendedName>
    <alternativeName>
        <fullName>Cytosine-specific methyltransferase NgoPII</fullName>
    </alternativeName>
    <alternativeName>
        <fullName>Modification methylase NgoPII</fullName>
    </alternativeName>
</protein>
<keyword id="KW-0238">DNA-binding</keyword>
<keyword id="KW-0489">Methyltransferase</keyword>
<keyword id="KW-0680">Restriction system</keyword>
<keyword id="KW-0949">S-adenosyl-L-methionine</keyword>
<keyword id="KW-0808">Transferase</keyword>
<proteinExistence type="inferred from homology"/>
<organism>
    <name type="scientific">Neisseria gonorrhoeae</name>
    <dbReference type="NCBI Taxonomy" id="485"/>
    <lineage>
        <taxon>Bacteria</taxon>
        <taxon>Pseudomonadati</taxon>
        <taxon>Pseudomonadota</taxon>
        <taxon>Betaproteobacteria</taxon>
        <taxon>Neisseriales</taxon>
        <taxon>Neisseriaceae</taxon>
        <taxon>Neisseria</taxon>
    </lineage>
</organism>
<accession>P08455</accession>
<name>MTP2_NEIGO</name>
<evidence type="ECO:0000255" key="1">
    <source>
        <dbReference type="PROSITE-ProRule" id="PRU01016"/>
    </source>
</evidence>
<evidence type="ECO:0000255" key="2">
    <source>
        <dbReference type="PROSITE-ProRule" id="PRU10018"/>
    </source>
</evidence>
<evidence type="ECO:0000303" key="3">
    <source>
    </source>
</evidence>
<evidence type="ECO:0000303" key="4">
    <source>
    </source>
</evidence>
<evidence type="ECO:0000303" key="5">
    <source>
    </source>
</evidence>
<evidence type="ECO:0000305" key="6">
    <source>
    </source>
</evidence>
<evidence type="ECO:0000305" key="7">
    <source>
    </source>
</evidence>
<gene>
    <name type="primary">ngoPIIM</name>
    <name evidence="5" type="synonym">dcmB</name>
</gene>
<comment type="function">
    <text evidence="3 6 7">A methylase that recognizes the double-stranded sequence 5'-GGCC-3', methylates C-3 on both strands, and protects the DNA from cleavage by the NgoPII endonuclease.</text>
</comment>
<comment type="catalytic activity">
    <reaction evidence="2">
        <text>a 2'-deoxycytidine in DNA + S-adenosyl-L-methionine = a 5-methyl-2'-deoxycytidine in DNA + S-adenosyl-L-homocysteine + H(+)</text>
        <dbReference type="Rhea" id="RHEA:13681"/>
        <dbReference type="Rhea" id="RHEA-COMP:11369"/>
        <dbReference type="Rhea" id="RHEA-COMP:11370"/>
        <dbReference type="ChEBI" id="CHEBI:15378"/>
        <dbReference type="ChEBI" id="CHEBI:57856"/>
        <dbReference type="ChEBI" id="CHEBI:59789"/>
        <dbReference type="ChEBI" id="CHEBI:85452"/>
        <dbReference type="ChEBI" id="CHEBI:85454"/>
        <dbReference type="EC" id="2.1.1.37"/>
    </reaction>
</comment>
<comment type="similarity">
    <text evidence="1">Belongs to the class I-like SAM-binding methyltransferase superfamily. C5-methyltransferase family.</text>
</comment>
<sequence>MQNSSPTTYNPMKIISLFSGCGGLDLGFEKAGFEIPAANEYDKTIWATFKANHPKTHLIEGDIRKIKEEDFPEEIDGIIGGPPCQSWSEAGALRGIDDARGQLFFDYIRILKSKQPKFFLAENVSGMLANRHNGAVQNLLKMFDGCGYDVTLTMANAKDYGVAQERKRVFYIGFRKDLEIKFSFPKGSTVEDKDKITLKDVIWDLQDTAVPSAPQNKTNPDAVNNNEYFTGSFSPIFMSRNRVKAWDEQGFTVQASGRQCQLHPQAPKMEKHGANDYRFAAGKETLYRRMTVREVARIQGFPDNFKFIYQNVNDAYKMIGNAVPVNLAYEIAAAIKKTLER</sequence>
<reference key="1">
    <citation type="journal article" date="1988" name="Nucleic Acids Res.">
        <title>Sequence analysis of the NgoPII methyltransferase gene from Neisseria gonorrhoeae P9: homologies with other enzymes recognizing the sequence 5'-GGCC-3'.</title>
        <authorList>
            <person name="Sullivan K.M."/>
            <person name="Saunders J.R."/>
        </authorList>
    </citation>
    <scope>NUCLEOTIDE SEQUENCE [GENOMIC DNA]</scope>
    <scope>FUNCTION</scope>
    <source>
        <strain>P9</strain>
    </source>
</reference>
<reference key="2">
    <citation type="journal article" date="1989" name="Mol. Gen. Genet.">
        <title>Nucleotide sequence and genetic organization of the NgoPII restriction-modification system of Neisseria gonorrhoeae.</title>
        <authorList>
            <person name="Sullivan K.M."/>
            <person name="Saunders J.R."/>
        </authorList>
    </citation>
    <scope>NUCLEOTIDE SEQUENCE [GENOMIC DNA]</scope>
    <scope>FUNCTION</scope>
    <source>
        <strain>P9</strain>
    </source>
</reference>
<reference key="3">
    <citation type="journal article" date="1993" name="Gene">
        <title>Natural variation of the NgoII restriction-modification system of Neisseria gonorrhoeae.</title>
        <authorList>
            <person name="Gunn J.S."/>
            <person name="Stein D.C."/>
        </authorList>
    </citation>
    <scope>NUCLEOTIDE SEQUENCE [GENOMIC DNA]</scope>
    <source>
        <strain>ATCC 33084 / F62 / M-1914</strain>
    </source>
</reference>
<reference key="4">
    <citation type="journal article" date="2003" name="Nucleic Acids Res.">
        <title>A nomenclature for restriction enzymes, DNA methyltransferases, homing endonucleases and their genes.</title>
        <authorList>
            <person name="Roberts R.J."/>
            <person name="Belfort M."/>
            <person name="Bestor T."/>
            <person name="Bhagwat A.S."/>
            <person name="Bickle T.A."/>
            <person name="Bitinaite J."/>
            <person name="Blumenthal R.M."/>
            <person name="Degtyarev S.K."/>
            <person name="Dryden D.T."/>
            <person name="Dybvig K."/>
            <person name="Firman K."/>
            <person name="Gromova E.S."/>
            <person name="Gumport R.I."/>
            <person name="Halford S.E."/>
            <person name="Hattman S."/>
            <person name="Heitman J."/>
            <person name="Hornby D.P."/>
            <person name="Janulaitis A."/>
            <person name="Jeltsch A."/>
            <person name="Josephsen J."/>
            <person name="Kiss A."/>
            <person name="Klaenhammer T.R."/>
            <person name="Kobayashi I."/>
            <person name="Kong H."/>
            <person name="Krueger D.H."/>
            <person name="Lacks S."/>
            <person name="Marinus M.G."/>
            <person name="Miyahara M."/>
            <person name="Morgan R.D."/>
            <person name="Murray N.E."/>
            <person name="Nagaraja V."/>
            <person name="Piekarowicz A."/>
            <person name="Pingoud A."/>
            <person name="Raleigh E."/>
            <person name="Rao D.N."/>
            <person name="Reich N."/>
            <person name="Repin V.E."/>
            <person name="Selker E.U."/>
            <person name="Shaw P.C."/>
            <person name="Stein D.C."/>
            <person name="Stoddard B.L."/>
            <person name="Szybalski W."/>
            <person name="Trautner T.A."/>
            <person name="Van Etten J.L."/>
            <person name="Vitor J.M."/>
            <person name="Wilson G.G."/>
            <person name="Xu S.Y."/>
        </authorList>
    </citation>
    <scope>NOMENCLATURE</scope>
</reference>
<dbReference type="EC" id="2.1.1.37" evidence="1"/>
<dbReference type="EMBL" id="X06965">
    <property type="protein sequence ID" value="CAA30038.1"/>
    <property type="molecule type" value="Genomic_DNA"/>
</dbReference>
<dbReference type="EMBL" id="X52661">
    <property type="protein sequence ID" value="CAA36888.1"/>
    <property type="molecule type" value="Genomic_DNA"/>
</dbReference>
<dbReference type="EMBL" id="L14564">
    <property type="protein sequence ID" value="AAA17019.1"/>
    <property type="molecule type" value="Unassigned_DNA"/>
</dbReference>
<dbReference type="PIR" id="S00920">
    <property type="entry name" value="CTNHP2"/>
</dbReference>
<dbReference type="SMR" id="P08455"/>
<dbReference type="REBASE" id="3135">
    <property type="entry name" value="NgoLIIP"/>
</dbReference>
<dbReference type="REBASE" id="3464">
    <property type="entry name" value="M.NgoPII"/>
</dbReference>
<dbReference type="REBASE" id="3609">
    <property type="entry name" value="M.NgoLII"/>
</dbReference>
<dbReference type="PRO" id="PR:P08455"/>
<dbReference type="GO" id="GO:0003886">
    <property type="term" value="F:DNA (cytosine-5-)-methyltransferase activity"/>
    <property type="evidence" value="ECO:0007669"/>
    <property type="project" value="UniProtKB-EC"/>
</dbReference>
<dbReference type="GO" id="GO:0003677">
    <property type="term" value="F:DNA binding"/>
    <property type="evidence" value="ECO:0007669"/>
    <property type="project" value="UniProtKB-KW"/>
</dbReference>
<dbReference type="GO" id="GO:0009307">
    <property type="term" value="P:DNA restriction-modification system"/>
    <property type="evidence" value="ECO:0007669"/>
    <property type="project" value="UniProtKB-KW"/>
</dbReference>
<dbReference type="GO" id="GO:0032259">
    <property type="term" value="P:methylation"/>
    <property type="evidence" value="ECO:0007669"/>
    <property type="project" value="UniProtKB-KW"/>
</dbReference>
<dbReference type="GO" id="GO:0044027">
    <property type="term" value="P:negative regulation of gene expression via chromosomal CpG island methylation"/>
    <property type="evidence" value="ECO:0007669"/>
    <property type="project" value="TreeGrafter"/>
</dbReference>
<dbReference type="CDD" id="cd00315">
    <property type="entry name" value="Cyt_C5_DNA_methylase"/>
    <property type="match status" value="1"/>
</dbReference>
<dbReference type="Gene3D" id="3.90.120.10">
    <property type="entry name" value="DNA Methylase, subunit A, domain 2"/>
    <property type="match status" value="1"/>
</dbReference>
<dbReference type="Gene3D" id="3.40.50.150">
    <property type="entry name" value="Vaccinia Virus protein VP39"/>
    <property type="match status" value="1"/>
</dbReference>
<dbReference type="InterPro" id="IPR050390">
    <property type="entry name" value="C5-Methyltransferase"/>
</dbReference>
<dbReference type="InterPro" id="IPR018117">
    <property type="entry name" value="C5_DNA_meth_AS"/>
</dbReference>
<dbReference type="InterPro" id="IPR001525">
    <property type="entry name" value="C5_MeTfrase"/>
</dbReference>
<dbReference type="InterPro" id="IPR031303">
    <property type="entry name" value="C5_meth_CS"/>
</dbReference>
<dbReference type="InterPro" id="IPR029063">
    <property type="entry name" value="SAM-dependent_MTases_sf"/>
</dbReference>
<dbReference type="NCBIfam" id="TIGR00675">
    <property type="entry name" value="dcm"/>
    <property type="match status" value="1"/>
</dbReference>
<dbReference type="PANTHER" id="PTHR10629">
    <property type="entry name" value="CYTOSINE-SPECIFIC METHYLTRANSFERASE"/>
    <property type="match status" value="1"/>
</dbReference>
<dbReference type="PANTHER" id="PTHR10629:SF52">
    <property type="entry name" value="DNA (CYTOSINE-5)-METHYLTRANSFERASE 1"/>
    <property type="match status" value="1"/>
</dbReference>
<dbReference type="Pfam" id="PF00145">
    <property type="entry name" value="DNA_methylase"/>
    <property type="match status" value="1"/>
</dbReference>
<dbReference type="PRINTS" id="PR00105">
    <property type="entry name" value="C5METTRFRASE"/>
</dbReference>
<dbReference type="SUPFAM" id="SSF53335">
    <property type="entry name" value="S-adenosyl-L-methionine-dependent methyltransferases"/>
    <property type="match status" value="1"/>
</dbReference>
<dbReference type="PROSITE" id="PS00094">
    <property type="entry name" value="C5_MTASE_1"/>
    <property type="match status" value="1"/>
</dbReference>
<dbReference type="PROSITE" id="PS00095">
    <property type="entry name" value="C5_MTASE_2"/>
    <property type="match status" value="1"/>
</dbReference>
<dbReference type="PROSITE" id="PS51679">
    <property type="entry name" value="SAM_MT_C5"/>
    <property type="match status" value="1"/>
</dbReference>